<evidence type="ECO:0000255" key="1">
    <source>
        <dbReference type="HAMAP-Rule" id="MF_01681"/>
    </source>
</evidence>
<evidence type="ECO:0000256" key="2">
    <source>
        <dbReference type="SAM" id="MobiDB-lite"/>
    </source>
</evidence>
<dbReference type="EC" id="3.1.3.77" evidence="1"/>
<dbReference type="EMBL" id="CP000783">
    <property type="protein sequence ID" value="ABU77957.1"/>
    <property type="molecule type" value="Genomic_DNA"/>
</dbReference>
<dbReference type="RefSeq" id="WP_004388199.1">
    <property type="nucleotide sequence ID" value="NC_009778.1"/>
</dbReference>
<dbReference type="SMR" id="A7MK11"/>
<dbReference type="KEGG" id="esa:ESA_02725"/>
<dbReference type="HOGENOM" id="CLU_023273_0_0_6"/>
<dbReference type="UniPathway" id="UPA00904">
    <property type="reaction ID" value="UER00876"/>
</dbReference>
<dbReference type="UniPathway" id="UPA00904">
    <property type="reaction ID" value="UER00877"/>
</dbReference>
<dbReference type="Proteomes" id="UP000000260">
    <property type="component" value="Chromosome"/>
</dbReference>
<dbReference type="GO" id="GO:0043715">
    <property type="term" value="F:2,3-diketo-5-methylthiopentyl-1-phosphate enolase activity"/>
    <property type="evidence" value="ECO:0007669"/>
    <property type="project" value="UniProtKB-UniRule"/>
</dbReference>
<dbReference type="GO" id="GO:0043716">
    <property type="term" value="F:2-hydroxy-3-keto-5-methylthiopentenyl-1-phosphate phosphatase activity"/>
    <property type="evidence" value="ECO:0007669"/>
    <property type="project" value="UniProtKB-UniRule"/>
</dbReference>
<dbReference type="GO" id="GO:0043874">
    <property type="term" value="F:acireductone synthase activity"/>
    <property type="evidence" value="ECO:0007669"/>
    <property type="project" value="UniProtKB-EC"/>
</dbReference>
<dbReference type="GO" id="GO:0000287">
    <property type="term" value="F:magnesium ion binding"/>
    <property type="evidence" value="ECO:0007669"/>
    <property type="project" value="UniProtKB-UniRule"/>
</dbReference>
<dbReference type="GO" id="GO:0019509">
    <property type="term" value="P:L-methionine salvage from methylthioadenosine"/>
    <property type="evidence" value="ECO:0007669"/>
    <property type="project" value="UniProtKB-UniRule"/>
</dbReference>
<dbReference type="CDD" id="cd01629">
    <property type="entry name" value="HAD_EP"/>
    <property type="match status" value="1"/>
</dbReference>
<dbReference type="Gene3D" id="1.10.720.60">
    <property type="match status" value="1"/>
</dbReference>
<dbReference type="Gene3D" id="3.40.50.1000">
    <property type="entry name" value="HAD superfamily/HAD-like"/>
    <property type="match status" value="1"/>
</dbReference>
<dbReference type="HAMAP" id="MF_01681">
    <property type="entry name" value="Salvage_MtnC"/>
    <property type="match status" value="1"/>
</dbReference>
<dbReference type="InterPro" id="IPR023943">
    <property type="entry name" value="Enolase-ppase_E1"/>
</dbReference>
<dbReference type="InterPro" id="IPR036412">
    <property type="entry name" value="HAD-like_sf"/>
</dbReference>
<dbReference type="InterPro" id="IPR023214">
    <property type="entry name" value="HAD_sf"/>
</dbReference>
<dbReference type="NCBIfam" id="TIGR01691">
    <property type="entry name" value="enolase-ppase"/>
    <property type="match status" value="1"/>
</dbReference>
<dbReference type="PANTHER" id="PTHR20371">
    <property type="entry name" value="ENOLASE-PHOSPHATASE E1"/>
    <property type="match status" value="1"/>
</dbReference>
<dbReference type="PANTHER" id="PTHR20371:SF1">
    <property type="entry name" value="ENOLASE-PHOSPHATASE E1"/>
    <property type="match status" value="1"/>
</dbReference>
<dbReference type="Pfam" id="PF00702">
    <property type="entry name" value="Hydrolase"/>
    <property type="match status" value="1"/>
</dbReference>
<dbReference type="SFLD" id="SFLDG01133">
    <property type="entry name" value="C1.5.4:_Enolase-phosphatase_Li"/>
    <property type="match status" value="1"/>
</dbReference>
<dbReference type="SFLD" id="SFLDF00044">
    <property type="entry name" value="enolase-phosphatase"/>
    <property type="match status" value="1"/>
</dbReference>
<dbReference type="SUPFAM" id="SSF56784">
    <property type="entry name" value="HAD-like"/>
    <property type="match status" value="1"/>
</dbReference>
<comment type="function">
    <text evidence="1">Bifunctional enzyme that catalyzes the enolization of 2,3-diketo-5-methylthiopentyl-1-phosphate (DK-MTP-1-P) into the intermediate 2-hydroxy-3-keto-5-methylthiopentenyl-1-phosphate (HK-MTPenyl-1-P), which is then dephosphorylated to form the acireductone 1,2-dihydroxy-3-keto-5-methylthiopentene (DHK-MTPene).</text>
</comment>
<comment type="catalytic activity">
    <reaction evidence="1">
        <text>5-methylsulfanyl-2,3-dioxopentyl phosphate + H2O = 1,2-dihydroxy-5-(methylsulfanyl)pent-1-en-3-one + phosphate</text>
        <dbReference type="Rhea" id="RHEA:21700"/>
        <dbReference type="ChEBI" id="CHEBI:15377"/>
        <dbReference type="ChEBI" id="CHEBI:43474"/>
        <dbReference type="ChEBI" id="CHEBI:49252"/>
        <dbReference type="ChEBI" id="CHEBI:58828"/>
        <dbReference type="EC" id="3.1.3.77"/>
    </reaction>
</comment>
<comment type="cofactor">
    <cofactor evidence="1">
        <name>Mg(2+)</name>
        <dbReference type="ChEBI" id="CHEBI:18420"/>
    </cofactor>
    <text evidence="1">Binds 1 Mg(2+) ion per subunit.</text>
</comment>
<comment type="pathway">
    <text evidence="1">Amino-acid biosynthesis; L-methionine biosynthesis via salvage pathway; L-methionine from S-methyl-5-thio-alpha-D-ribose 1-phosphate: step 3/6.</text>
</comment>
<comment type="pathway">
    <text evidence="1">Amino-acid biosynthesis; L-methionine biosynthesis via salvage pathway; L-methionine from S-methyl-5-thio-alpha-D-ribose 1-phosphate: step 4/6.</text>
</comment>
<comment type="subunit">
    <text evidence="1">Monomer.</text>
</comment>
<comment type="similarity">
    <text evidence="1">Belongs to the HAD-like hydrolase superfamily. MasA/MtnC family.</text>
</comment>
<reference key="1">
    <citation type="journal article" date="2010" name="PLoS ONE">
        <title>Genome sequence of Cronobacter sakazakii BAA-894 and comparative genomic hybridization analysis with other Cronobacter species.</title>
        <authorList>
            <person name="Kucerova E."/>
            <person name="Clifton S.W."/>
            <person name="Xia X.Q."/>
            <person name="Long F."/>
            <person name="Porwollik S."/>
            <person name="Fulton L."/>
            <person name="Fronick C."/>
            <person name="Minx P."/>
            <person name="Kyung K."/>
            <person name="Warren W."/>
            <person name="Fulton R."/>
            <person name="Feng D."/>
            <person name="Wollam A."/>
            <person name="Shah N."/>
            <person name="Bhonagiri V."/>
            <person name="Nash W.E."/>
            <person name="Hallsworth-Pepin K."/>
            <person name="Wilson R.K."/>
            <person name="McClelland M."/>
            <person name="Forsythe S.J."/>
        </authorList>
    </citation>
    <scope>NUCLEOTIDE SEQUENCE [LARGE SCALE GENOMIC DNA]</scope>
    <source>
        <strain>ATCC BAA-894</strain>
    </source>
</reference>
<sequence length="229" mass="26132">MIRAIVTDIEGTTTDIRFVHNVLFPYARERLERFIRSGEQREPVNLLLNELRGEIHAPAASVDQLIETLFKFMDEDRKSPALKSIQGYIWREGYVNGDFTGHLYPDVVPALRRWSAQDIDIYIYSSGSVPAQKLLFSHSDEGDVTELLSGFFDTHVGAKRQVSSYRNISMKTGVPVHQMLFLSDIREELDAAREAGWKTVQLIRGEPDTQSTHRQVSSFDDIHPEQIPT</sequence>
<accession>A7MK11</accession>
<organism>
    <name type="scientific">Cronobacter sakazakii (strain ATCC BAA-894)</name>
    <name type="common">Enterobacter sakazakii</name>
    <dbReference type="NCBI Taxonomy" id="290339"/>
    <lineage>
        <taxon>Bacteria</taxon>
        <taxon>Pseudomonadati</taxon>
        <taxon>Pseudomonadota</taxon>
        <taxon>Gammaproteobacteria</taxon>
        <taxon>Enterobacterales</taxon>
        <taxon>Enterobacteriaceae</taxon>
        <taxon>Cronobacter</taxon>
    </lineage>
</organism>
<proteinExistence type="inferred from homology"/>
<gene>
    <name evidence="1" type="primary">mtnC</name>
    <name type="ordered locus">ESA_02725</name>
</gene>
<protein>
    <recommendedName>
        <fullName evidence="1">Enolase-phosphatase E1</fullName>
        <ecNumber evidence="1">3.1.3.77</ecNumber>
    </recommendedName>
    <alternativeName>
        <fullName evidence="1">2,3-diketo-5-methylthio-1-phosphopentane phosphatase</fullName>
    </alternativeName>
</protein>
<feature type="chain" id="PRO_0000357362" description="Enolase-phosphatase E1">
    <location>
        <begin position="1"/>
        <end position="229"/>
    </location>
</feature>
<feature type="region of interest" description="Disordered" evidence="2">
    <location>
        <begin position="208"/>
        <end position="229"/>
    </location>
</feature>
<feature type="compositionally biased region" description="Polar residues" evidence="2">
    <location>
        <begin position="208"/>
        <end position="218"/>
    </location>
</feature>
<feature type="compositionally biased region" description="Basic and acidic residues" evidence="2">
    <location>
        <begin position="220"/>
        <end position="229"/>
    </location>
</feature>
<name>MTNC_CROS8</name>
<keyword id="KW-0028">Amino-acid biosynthesis</keyword>
<keyword id="KW-0378">Hydrolase</keyword>
<keyword id="KW-0460">Magnesium</keyword>
<keyword id="KW-0479">Metal-binding</keyword>
<keyword id="KW-0486">Methionine biosynthesis</keyword>
<keyword id="KW-1185">Reference proteome</keyword>